<keyword id="KW-0106">Calcium</keyword>
<keyword id="KW-1015">Disulfide bond</keyword>
<keyword id="KW-0348">Hemagglutinin</keyword>
<keyword id="KW-0430">Lectin</keyword>
<keyword id="KW-0479">Metal-binding</keyword>
<keyword id="KW-0964">Secreted</keyword>
<keyword id="KW-0732">Signal</keyword>
<accession>D2YVK1</accession>
<comment type="function">
    <text evidence="1">Galactose-binding lectin that binds to and agglutinates erythrocytes in a calcium-dependent manner.</text>
</comment>
<comment type="subunit">
    <text evidence="1">Homodimer; disulfide-linked.</text>
</comment>
<comment type="subcellular location">
    <subcellularLocation>
        <location evidence="1">Secreted</location>
    </subcellularLocation>
</comment>
<comment type="tissue specificity">
    <text>Expressed by the venom gland.</text>
</comment>
<comment type="similarity">
    <text evidence="4">Belongs to the true venom lectin family.</text>
</comment>
<dbReference type="EMBL" id="EF194744">
    <property type="protein sequence ID" value="ABP94089.1"/>
    <property type="molecule type" value="mRNA"/>
</dbReference>
<dbReference type="SMR" id="D2YVK1"/>
<dbReference type="GO" id="GO:0005576">
    <property type="term" value="C:extracellular region"/>
    <property type="evidence" value="ECO:0007669"/>
    <property type="project" value="UniProtKB-SubCell"/>
</dbReference>
<dbReference type="GO" id="GO:0030246">
    <property type="term" value="F:carbohydrate binding"/>
    <property type="evidence" value="ECO:0007669"/>
    <property type="project" value="UniProtKB-KW"/>
</dbReference>
<dbReference type="GO" id="GO:0046872">
    <property type="term" value="F:metal ion binding"/>
    <property type="evidence" value="ECO:0007669"/>
    <property type="project" value="UniProtKB-KW"/>
</dbReference>
<dbReference type="CDD" id="cd03594">
    <property type="entry name" value="CLECT_REG-1_like"/>
    <property type="match status" value="1"/>
</dbReference>
<dbReference type="FunFam" id="3.10.100.10:FF:000015">
    <property type="entry name" value="C-type lectin Cal"/>
    <property type="match status" value="1"/>
</dbReference>
<dbReference type="Gene3D" id="3.10.100.10">
    <property type="entry name" value="Mannose-Binding Protein A, subunit A"/>
    <property type="match status" value="1"/>
</dbReference>
<dbReference type="InterPro" id="IPR001304">
    <property type="entry name" value="C-type_lectin-like"/>
</dbReference>
<dbReference type="InterPro" id="IPR016186">
    <property type="entry name" value="C-type_lectin-like/link_sf"/>
</dbReference>
<dbReference type="InterPro" id="IPR050111">
    <property type="entry name" value="C-type_lectin/snaclec_domain"/>
</dbReference>
<dbReference type="InterPro" id="IPR018378">
    <property type="entry name" value="C-type_lectin_CS"/>
</dbReference>
<dbReference type="InterPro" id="IPR016187">
    <property type="entry name" value="CTDL_fold"/>
</dbReference>
<dbReference type="PANTHER" id="PTHR22803">
    <property type="entry name" value="MANNOSE, PHOSPHOLIPASE, LECTIN RECEPTOR RELATED"/>
    <property type="match status" value="1"/>
</dbReference>
<dbReference type="Pfam" id="PF00059">
    <property type="entry name" value="Lectin_C"/>
    <property type="match status" value="1"/>
</dbReference>
<dbReference type="PRINTS" id="PR01504">
    <property type="entry name" value="PNCREATITSAP"/>
</dbReference>
<dbReference type="SMART" id="SM00034">
    <property type="entry name" value="CLECT"/>
    <property type="match status" value="1"/>
</dbReference>
<dbReference type="SUPFAM" id="SSF56436">
    <property type="entry name" value="C-type lectin-like"/>
    <property type="match status" value="1"/>
</dbReference>
<dbReference type="PROSITE" id="PS00615">
    <property type="entry name" value="C_TYPE_LECTIN_1"/>
    <property type="match status" value="1"/>
</dbReference>
<dbReference type="PROSITE" id="PS50041">
    <property type="entry name" value="C_TYPE_LECTIN_2"/>
    <property type="match status" value="1"/>
</dbReference>
<protein>
    <recommendedName>
        <fullName>C-type lectin galactose-binding isoform</fullName>
        <shortName>CTL</shortName>
    </recommendedName>
    <alternativeName>
        <fullName>Venom C-type lectin galactose binding isoform</fullName>
    </alternativeName>
</protein>
<reference key="1">
    <citation type="journal article" date="2011" name="Biochimie">
        <title>Characterisation of a mannose-binding C-type lectin from Oxyuranus scutellatus snake venom.</title>
        <authorList>
            <person name="Earl S.T."/>
            <person name="Robson J."/>
            <person name="Trabi M."/>
            <person name="de Jersey J."/>
            <person name="Masci P.P."/>
            <person name="Lavin M.F."/>
        </authorList>
    </citation>
    <scope>NUCLEOTIDE SEQUENCE [MRNA]</scope>
    <source>
        <tissue>Venom gland</tissue>
    </source>
</reference>
<proteinExistence type="evidence at transcript level"/>
<name>LECG_HOPST</name>
<sequence length="158" mass="18567">MGRFLLVTLSLLVVAFSLNGANNCCCPQDWLPKNGYCYKVFKDHKSWDDAEMFCRKLKPGCHLASLHSNADAFDFSEYITDYLTGHDHVWIGLRDTEKNYIWEWTDRSRTDFLPWKKDQPDHHNNDEFCVEIVSFTGYLQWNDDSCTALRPFLCQCKH</sequence>
<evidence type="ECO:0000250" key="1"/>
<evidence type="ECO:0000255" key="2"/>
<evidence type="ECO:0000255" key="3">
    <source>
        <dbReference type="PROSITE-ProRule" id="PRU00040"/>
    </source>
</evidence>
<evidence type="ECO:0000305" key="4"/>
<feature type="signal peptide" evidence="2">
    <location>
        <begin position="1"/>
        <end position="20"/>
    </location>
</feature>
<feature type="chain" id="PRO_0000422552" description="C-type lectin galactose-binding isoform">
    <location>
        <begin position="21"/>
        <end position="158"/>
    </location>
</feature>
<feature type="domain" description="C-type lectin" evidence="3">
    <location>
        <begin position="33"/>
        <end position="155"/>
    </location>
</feature>
<feature type="short sequence motif" description="Galactose-binding">
    <location>
        <begin position="119"/>
        <end position="121"/>
    </location>
</feature>
<feature type="binding site" evidence="1">
    <location>
        <position position="119"/>
    </location>
    <ligand>
        <name>Ca(2+)</name>
        <dbReference type="ChEBI" id="CHEBI:29108"/>
    </ligand>
</feature>
<feature type="binding site" evidence="1">
    <location>
        <position position="121"/>
    </location>
    <ligand>
        <name>Ca(2+)</name>
        <dbReference type="ChEBI" id="CHEBI:29108"/>
    </ligand>
</feature>
<feature type="binding site" evidence="1">
    <location>
        <position position="127"/>
    </location>
    <ligand>
        <name>Ca(2+)</name>
        <dbReference type="ChEBI" id="CHEBI:29108"/>
    </ligand>
</feature>
<feature type="binding site" evidence="1">
    <location>
        <position position="142"/>
    </location>
    <ligand>
        <name>Ca(2+)</name>
        <dbReference type="ChEBI" id="CHEBI:29108"/>
    </ligand>
</feature>
<feature type="binding site" evidence="1">
    <location>
        <position position="143"/>
    </location>
    <ligand>
        <name>Ca(2+)</name>
        <dbReference type="ChEBI" id="CHEBI:29108"/>
    </ligand>
</feature>
<feature type="disulfide bond" evidence="3">
    <location>
        <begin position="26"/>
        <end position="37"/>
    </location>
</feature>
<feature type="disulfide bond" evidence="3">
    <location>
        <begin position="54"/>
        <end position="154"/>
    </location>
</feature>
<feature type="disulfide bond" evidence="3">
    <location>
        <begin position="129"/>
        <end position="146"/>
    </location>
</feature>
<organism>
    <name type="scientific">Hoplocephalus stephensii</name>
    <name type="common">Stephens's banded snake</name>
    <dbReference type="NCBI Taxonomy" id="196418"/>
    <lineage>
        <taxon>Eukaryota</taxon>
        <taxon>Metazoa</taxon>
        <taxon>Chordata</taxon>
        <taxon>Craniata</taxon>
        <taxon>Vertebrata</taxon>
        <taxon>Euteleostomi</taxon>
        <taxon>Lepidosauria</taxon>
        <taxon>Squamata</taxon>
        <taxon>Bifurcata</taxon>
        <taxon>Unidentata</taxon>
        <taxon>Episquamata</taxon>
        <taxon>Toxicofera</taxon>
        <taxon>Serpentes</taxon>
        <taxon>Colubroidea</taxon>
        <taxon>Elapidae</taxon>
        <taxon>Notechinae</taxon>
        <taxon>Hoplocephalus</taxon>
    </lineage>
</organism>